<proteinExistence type="inferred from homology"/>
<dbReference type="EC" id="4.1.99.17" evidence="1"/>
<dbReference type="EMBL" id="BX936398">
    <property type="protein sequence ID" value="CAH19530.1"/>
    <property type="molecule type" value="Genomic_DNA"/>
</dbReference>
<dbReference type="RefSeq" id="WP_002210682.1">
    <property type="nucleotide sequence ID" value="NZ_CP009712.1"/>
</dbReference>
<dbReference type="SMR" id="Q66FP5"/>
<dbReference type="GeneID" id="57974979"/>
<dbReference type="KEGG" id="ypo:BZ17_2283"/>
<dbReference type="KEGG" id="yps:YPTB0290"/>
<dbReference type="PATRIC" id="fig|273123.14.peg.2414"/>
<dbReference type="UniPathway" id="UPA00060"/>
<dbReference type="Proteomes" id="UP000001011">
    <property type="component" value="Chromosome"/>
</dbReference>
<dbReference type="GO" id="GO:0005829">
    <property type="term" value="C:cytosol"/>
    <property type="evidence" value="ECO:0007669"/>
    <property type="project" value="TreeGrafter"/>
</dbReference>
<dbReference type="GO" id="GO:0051539">
    <property type="term" value="F:4 iron, 4 sulfur cluster binding"/>
    <property type="evidence" value="ECO:0007669"/>
    <property type="project" value="UniProtKB-KW"/>
</dbReference>
<dbReference type="GO" id="GO:0016830">
    <property type="term" value="F:carbon-carbon lyase activity"/>
    <property type="evidence" value="ECO:0007669"/>
    <property type="project" value="InterPro"/>
</dbReference>
<dbReference type="GO" id="GO:0008270">
    <property type="term" value="F:zinc ion binding"/>
    <property type="evidence" value="ECO:0007669"/>
    <property type="project" value="UniProtKB-UniRule"/>
</dbReference>
<dbReference type="GO" id="GO:0009228">
    <property type="term" value="P:thiamine biosynthetic process"/>
    <property type="evidence" value="ECO:0007669"/>
    <property type="project" value="UniProtKB-KW"/>
</dbReference>
<dbReference type="GO" id="GO:0009229">
    <property type="term" value="P:thiamine diphosphate biosynthetic process"/>
    <property type="evidence" value="ECO:0007669"/>
    <property type="project" value="UniProtKB-UniRule"/>
</dbReference>
<dbReference type="FunFam" id="3.20.20.540:FF:000001">
    <property type="entry name" value="Phosphomethylpyrimidine synthase"/>
    <property type="match status" value="1"/>
</dbReference>
<dbReference type="Gene3D" id="6.10.250.620">
    <property type="match status" value="1"/>
</dbReference>
<dbReference type="Gene3D" id="3.20.20.540">
    <property type="entry name" value="Radical SAM ThiC family, central domain"/>
    <property type="match status" value="1"/>
</dbReference>
<dbReference type="HAMAP" id="MF_00089">
    <property type="entry name" value="ThiC"/>
    <property type="match status" value="1"/>
</dbReference>
<dbReference type="InterPro" id="IPR037509">
    <property type="entry name" value="ThiC"/>
</dbReference>
<dbReference type="InterPro" id="IPR025747">
    <property type="entry name" value="ThiC-associated_dom"/>
</dbReference>
<dbReference type="InterPro" id="IPR038521">
    <property type="entry name" value="ThiC/Bza_core_dom"/>
</dbReference>
<dbReference type="InterPro" id="IPR002817">
    <property type="entry name" value="ThiC/BzaA/B"/>
</dbReference>
<dbReference type="NCBIfam" id="NF006763">
    <property type="entry name" value="PRK09284.1"/>
    <property type="match status" value="1"/>
</dbReference>
<dbReference type="NCBIfam" id="NF009895">
    <property type="entry name" value="PRK13352.1"/>
    <property type="match status" value="1"/>
</dbReference>
<dbReference type="NCBIfam" id="TIGR00190">
    <property type="entry name" value="thiC"/>
    <property type="match status" value="1"/>
</dbReference>
<dbReference type="PANTHER" id="PTHR30557:SF1">
    <property type="entry name" value="PHOSPHOMETHYLPYRIMIDINE SYNTHASE, CHLOROPLASTIC"/>
    <property type="match status" value="1"/>
</dbReference>
<dbReference type="PANTHER" id="PTHR30557">
    <property type="entry name" value="THIAMINE BIOSYNTHESIS PROTEIN THIC"/>
    <property type="match status" value="1"/>
</dbReference>
<dbReference type="Pfam" id="PF13667">
    <property type="entry name" value="ThiC-associated"/>
    <property type="match status" value="1"/>
</dbReference>
<dbReference type="Pfam" id="PF01964">
    <property type="entry name" value="ThiC_Rad_SAM"/>
    <property type="match status" value="1"/>
</dbReference>
<dbReference type="SFLD" id="SFLDF00407">
    <property type="entry name" value="phosphomethylpyrimidine_syntha"/>
    <property type="match status" value="1"/>
</dbReference>
<dbReference type="SFLD" id="SFLDG01114">
    <property type="entry name" value="phosphomethylpyrimidine_syntha"/>
    <property type="match status" value="1"/>
</dbReference>
<dbReference type="SFLD" id="SFLDS00113">
    <property type="entry name" value="Radical_SAM_Phosphomethylpyrim"/>
    <property type="match status" value="1"/>
</dbReference>
<keyword id="KW-0004">4Fe-4S</keyword>
<keyword id="KW-0408">Iron</keyword>
<keyword id="KW-0411">Iron-sulfur</keyword>
<keyword id="KW-0456">Lyase</keyword>
<keyword id="KW-0479">Metal-binding</keyword>
<keyword id="KW-0949">S-adenosyl-L-methionine</keyword>
<keyword id="KW-0784">Thiamine biosynthesis</keyword>
<keyword id="KW-0862">Zinc</keyword>
<feature type="chain" id="PRO_0000242322" description="Phosphomethylpyrimidine synthase">
    <location>
        <begin position="1"/>
        <end position="681"/>
    </location>
</feature>
<feature type="region of interest" description="Disordered" evidence="2">
    <location>
        <begin position="1"/>
        <end position="29"/>
    </location>
</feature>
<feature type="region of interest" description="Disordered" evidence="2">
    <location>
        <begin position="658"/>
        <end position="681"/>
    </location>
</feature>
<feature type="compositionally biased region" description="Polar residues" evidence="2">
    <location>
        <begin position="1"/>
        <end position="13"/>
    </location>
</feature>
<feature type="compositionally biased region" description="Basic residues" evidence="2">
    <location>
        <begin position="15"/>
        <end position="25"/>
    </location>
</feature>
<feature type="compositionally biased region" description="Basic and acidic residues" evidence="2">
    <location>
        <begin position="658"/>
        <end position="667"/>
    </location>
</feature>
<feature type="binding site" evidence="1">
    <location>
        <position position="254"/>
    </location>
    <ligand>
        <name>substrate</name>
    </ligand>
</feature>
<feature type="binding site" evidence="1">
    <location>
        <position position="283"/>
    </location>
    <ligand>
        <name>substrate</name>
    </ligand>
</feature>
<feature type="binding site" evidence="1">
    <location>
        <position position="312"/>
    </location>
    <ligand>
        <name>substrate</name>
    </ligand>
</feature>
<feature type="binding site" evidence="1">
    <location>
        <position position="348"/>
    </location>
    <ligand>
        <name>substrate</name>
    </ligand>
</feature>
<feature type="binding site" evidence="1">
    <location>
        <begin position="368"/>
        <end position="370"/>
    </location>
    <ligand>
        <name>substrate</name>
    </ligand>
</feature>
<feature type="binding site" evidence="1">
    <location>
        <begin position="409"/>
        <end position="412"/>
    </location>
    <ligand>
        <name>substrate</name>
    </ligand>
</feature>
<feature type="binding site" evidence="1">
    <location>
        <position position="448"/>
    </location>
    <ligand>
        <name>substrate</name>
    </ligand>
</feature>
<feature type="binding site" evidence="1">
    <location>
        <position position="452"/>
    </location>
    <ligand>
        <name>Zn(2+)</name>
        <dbReference type="ChEBI" id="CHEBI:29105"/>
    </ligand>
</feature>
<feature type="binding site" evidence="1">
    <location>
        <position position="475"/>
    </location>
    <ligand>
        <name>substrate</name>
    </ligand>
</feature>
<feature type="binding site" evidence="1">
    <location>
        <position position="516"/>
    </location>
    <ligand>
        <name>Zn(2+)</name>
        <dbReference type="ChEBI" id="CHEBI:29105"/>
    </ligand>
</feature>
<feature type="binding site" evidence="1">
    <location>
        <position position="596"/>
    </location>
    <ligand>
        <name>[4Fe-4S] cluster</name>
        <dbReference type="ChEBI" id="CHEBI:49883"/>
        <note>4Fe-4S-S-AdoMet</note>
    </ligand>
</feature>
<feature type="binding site" evidence="1">
    <location>
        <position position="599"/>
    </location>
    <ligand>
        <name>[4Fe-4S] cluster</name>
        <dbReference type="ChEBI" id="CHEBI:49883"/>
        <note>4Fe-4S-S-AdoMet</note>
    </ligand>
</feature>
<feature type="binding site" evidence="1">
    <location>
        <position position="604"/>
    </location>
    <ligand>
        <name>[4Fe-4S] cluster</name>
        <dbReference type="ChEBI" id="CHEBI:49883"/>
        <note>4Fe-4S-S-AdoMet</note>
    </ligand>
</feature>
<protein>
    <recommendedName>
        <fullName evidence="1">Phosphomethylpyrimidine synthase</fullName>
        <ecNumber evidence="1">4.1.99.17</ecNumber>
    </recommendedName>
    <alternativeName>
        <fullName evidence="1">Hydroxymethylpyrimidine phosphate synthase</fullName>
        <shortName evidence="1">HMP-P synthase</shortName>
        <shortName evidence="1">HMP-phosphate synthase</shortName>
        <shortName evidence="1">HMPP synthase</shortName>
    </alternativeName>
    <alternativeName>
        <fullName evidence="1">Thiamine biosynthesis protein ThiC</fullName>
    </alternativeName>
</protein>
<comment type="function">
    <text evidence="1">Catalyzes the synthesis of the hydroxymethylpyrimidine phosphate (HMP-P) moiety of thiamine from aminoimidazole ribotide (AIR) in a radical S-adenosyl-L-methionine (SAM)-dependent reaction.</text>
</comment>
<comment type="catalytic activity">
    <reaction evidence="1">
        <text>5-amino-1-(5-phospho-beta-D-ribosyl)imidazole + S-adenosyl-L-methionine = 4-amino-2-methyl-5-(phosphooxymethyl)pyrimidine + CO + 5'-deoxyadenosine + formate + L-methionine + 3 H(+)</text>
        <dbReference type="Rhea" id="RHEA:24840"/>
        <dbReference type="ChEBI" id="CHEBI:15378"/>
        <dbReference type="ChEBI" id="CHEBI:15740"/>
        <dbReference type="ChEBI" id="CHEBI:17245"/>
        <dbReference type="ChEBI" id="CHEBI:17319"/>
        <dbReference type="ChEBI" id="CHEBI:57844"/>
        <dbReference type="ChEBI" id="CHEBI:58354"/>
        <dbReference type="ChEBI" id="CHEBI:59789"/>
        <dbReference type="ChEBI" id="CHEBI:137981"/>
        <dbReference type="EC" id="4.1.99.17"/>
    </reaction>
</comment>
<comment type="cofactor">
    <cofactor evidence="1">
        <name>[4Fe-4S] cluster</name>
        <dbReference type="ChEBI" id="CHEBI:49883"/>
    </cofactor>
    <text evidence="1">Binds 1 [4Fe-4S] cluster per subunit. The cluster is coordinated with 3 cysteines and an exchangeable S-adenosyl-L-methionine.</text>
</comment>
<comment type="pathway">
    <text evidence="1">Cofactor biosynthesis; thiamine diphosphate biosynthesis.</text>
</comment>
<comment type="subunit">
    <text evidence="1">Homodimer.</text>
</comment>
<comment type="similarity">
    <text evidence="1">Belongs to the ThiC family.</text>
</comment>
<accession>Q66FP5</accession>
<reference key="1">
    <citation type="journal article" date="2004" name="Proc. Natl. Acad. Sci. U.S.A.">
        <title>Insights into the evolution of Yersinia pestis through whole-genome comparison with Yersinia pseudotuberculosis.</title>
        <authorList>
            <person name="Chain P.S.G."/>
            <person name="Carniel E."/>
            <person name="Larimer F.W."/>
            <person name="Lamerdin J."/>
            <person name="Stoutland P.O."/>
            <person name="Regala W.M."/>
            <person name="Georgescu A.M."/>
            <person name="Vergez L.M."/>
            <person name="Land M.L."/>
            <person name="Motin V.L."/>
            <person name="Brubaker R.R."/>
            <person name="Fowler J."/>
            <person name="Hinnebusch J."/>
            <person name="Marceau M."/>
            <person name="Medigue C."/>
            <person name="Simonet M."/>
            <person name="Chenal-Francisque V."/>
            <person name="Souza B."/>
            <person name="Dacheux D."/>
            <person name="Elliott J.M."/>
            <person name="Derbise A."/>
            <person name="Hauser L.J."/>
            <person name="Garcia E."/>
        </authorList>
    </citation>
    <scope>NUCLEOTIDE SEQUENCE [LARGE SCALE GENOMIC DNA]</scope>
    <source>
        <strain>IP32953</strain>
    </source>
</reference>
<organism>
    <name type="scientific">Yersinia pseudotuberculosis serotype I (strain IP32953)</name>
    <dbReference type="NCBI Taxonomy" id="273123"/>
    <lineage>
        <taxon>Bacteria</taxon>
        <taxon>Pseudomonadati</taxon>
        <taxon>Pseudomonadota</taxon>
        <taxon>Gammaproteobacteria</taxon>
        <taxon>Enterobacterales</taxon>
        <taxon>Yersiniaceae</taxon>
        <taxon>Yersinia</taxon>
    </lineage>
</organism>
<gene>
    <name evidence="1" type="primary">thiC</name>
    <name type="ordered locus">YPTB0290</name>
</gene>
<evidence type="ECO:0000255" key="1">
    <source>
        <dbReference type="HAMAP-Rule" id="MF_00089"/>
    </source>
</evidence>
<evidence type="ECO:0000256" key="2">
    <source>
        <dbReference type="SAM" id="MobiDB-lite"/>
    </source>
</evidence>
<sequence length="681" mass="75878">MSNNTTSLPAENSSHPRKGTPIRKKQREEAQQFINTLQGVTFPNSQRIYLQGSRPDIQVPMREIQLSPTQIGGSKNEPRYEDNEAIPVYDTSGPYGDPQAKLDVHNGLPKLRAAWVADRQDTEALASVSSGFTQQRLADEGLDHLRFEHLPRPRKAATGQCVTQLHYARQGKITPEMEFIALRENMGRERIRGEVLLQQHPGQAFGAHLPENITAEFVRQEVAAGRAIIPANINHPESEPMIIGRNFLVKVNANIGNSAVTSSIEEEVEKLVWSTRWGADTVMDLSTGRYIHETREWILRNSPVPIGTVPIYQALEKVNGVAENLTWEMFRDTLLEQAEQGVDYFTLHAGVLLRYVPMTAKRLTGIVSRGGSIMAKWCLSHHQENFLYQHFREICQICAAYDVSLSLGDGLRPGSIQDANDEAQFAELHTLGELTKIAWEYDVQVMIEGPGHVPMQMIRRNMTEELEHCHEAPFYTLGPLTTDIAPGYDHFTSGIGAAMIGWFGCAMLCYVTPKEHLGLPNKEDVKQGLITYKIAAHAADLAKGHPGAQIRDNAMSKARFEFRWEDQFNLALDPATARAYHDETLPQESGKVAHFCSMCGPKFCSMKISQEVRDYAAAQEQAAAQAQAATPTTAAQPIDITQPINMLQSGMEKMSAEFRSRGSELYHRPANLSAEANNEPT</sequence>
<name>THIC_YERPS</name>